<feature type="chain" id="PRO_0000128037" description="Uncharacterized protein AF_1617">
    <location>
        <begin position="1"/>
        <end position="77"/>
    </location>
</feature>
<feature type="transmembrane region" description="Helical" evidence="1">
    <location>
        <begin position="49"/>
        <end position="71"/>
    </location>
</feature>
<keyword id="KW-0472">Membrane</keyword>
<keyword id="KW-1185">Reference proteome</keyword>
<keyword id="KW-0812">Transmembrane</keyword>
<keyword id="KW-1133">Transmembrane helix</keyword>
<dbReference type="EMBL" id="AE000782">
    <property type="protein sequence ID" value="AAB89644.1"/>
    <property type="molecule type" value="Genomic_DNA"/>
</dbReference>
<dbReference type="PIR" id="H69451">
    <property type="entry name" value="H69451"/>
</dbReference>
<dbReference type="RefSeq" id="WP_010879114.1">
    <property type="nucleotide sequence ID" value="NC_000917.1"/>
</dbReference>
<dbReference type="STRING" id="224325.AF_1617"/>
<dbReference type="PaxDb" id="224325-AF_1617"/>
<dbReference type="EnsemblBacteria" id="AAB89644">
    <property type="protein sequence ID" value="AAB89644"/>
    <property type="gene ID" value="AF_1617"/>
</dbReference>
<dbReference type="GeneID" id="1484842"/>
<dbReference type="KEGG" id="afu:AF_1617"/>
<dbReference type="HOGENOM" id="CLU_2629490_0_0_2"/>
<dbReference type="Proteomes" id="UP000002199">
    <property type="component" value="Chromosome"/>
</dbReference>
<dbReference type="GO" id="GO:0016020">
    <property type="term" value="C:membrane"/>
    <property type="evidence" value="ECO:0007669"/>
    <property type="project" value="UniProtKB-SubCell"/>
</dbReference>
<gene>
    <name type="ordered locus">AF_1617</name>
</gene>
<organism>
    <name type="scientific">Archaeoglobus fulgidus (strain ATCC 49558 / DSM 4304 / JCM 9628 / NBRC 100126 / VC-16)</name>
    <dbReference type="NCBI Taxonomy" id="224325"/>
    <lineage>
        <taxon>Archaea</taxon>
        <taxon>Methanobacteriati</taxon>
        <taxon>Methanobacteriota</taxon>
        <taxon>Archaeoglobi</taxon>
        <taxon>Archaeoglobales</taxon>
        <taxon>Archaeoglobaceae</taxon>
        <taxon>Archaeoglobus</taxon>
    </lineage>
</organism>
<name>Y1617_ARCFU</name>
<proteinExistence type="predicted"/>
<evidence type="ECO:0000255" key="1"/>
<evidence type="ECO:0000305" key="2"/>
<protein>
    <recommendedName>
        <fullName>Uncharacterized protein AF_1617</fullName>
    </recommendedName>
</protein>
<accession>O28656</accession>
<comment type="subcellular location">
    <subcellularLocation>
        <location evidence="2">Membrane</location>
        <topology evidence="2">Single-pass membrane protein</topology>
    </subcellularLocation>
</comment>
<sequence>MAREEPCPNCGKMAEIVSEGDREILRCAACGTERVIVGMEEILPIEKKLVIASLILAIILLGILYYISYQMIAHLYT</sequence>
<reference key="1">
    <citation type="journal article" date="1997" name="Nature">
        <title>The complete genome sequence of the hyperthermophilic, sulphate-reducing archaeon Archaeoglobus fulgidus.</title>
        <authorList>
            <person name="Klenk H.-P."/>
            <person name="Clayton R.A."/>
            <person name="Tomb J.-F."/>
            <person name="White O."/>
            <person name="Nelson K.E."/>
            <person name="Ketchum K.A."/>
            <person name="Dodson R.J."/>
            <person name="Gwinn M.L."/>
            <person name="Hickey E.K."/>
            <person name="Peterson J.D."/>
            <person name="Richardson D.L."/>
            <person name="Kerlavage A.R."/>
            <person name="Graham D.E."/>
            <person name="Kyrpides N.C."/>
            <person name="Fleischmann R.D."/>
            <person name="Quackenbush J."/>
            <person name="Lee N.H."/>
            <person name="Sutton G.G."/>
            <person name="Gill S.R."/>
            <person name="Kirkness E.F."/>
            <person name="Dougherty B.A."/>
            <person name="McKenney K."/>
            <person name="Adams M.D."/>
            <person name="Loftus B.J."/>
            <person name="Peterson S.N."/>
            <person name="Reich C.I."/>
            <person name="McNeil L.K."/>
            <person name="Badger J.H."/>
            <person name="Glodek A."/>
            <person name="Zhou L."/>
            <person name="Overbeek R."/>
            <person name="Gocayne J.D."/>
            <person name="Weidman J.F."/>
            <person name="McDonald L.A."/>
            <person name="Utterback T.R."/>
            <person name="Cotton M.D."/>
            <person name="Spriggs T."/>
            <person name="Artiach P."/>
            <person name="Kaine B.P."/>
            <person name="Sykes S.M."/>
            <person name="Sadow P.W."/>
            <person name="D'Andrea K.P."/>
            <person name="Bowman C."/>
            <person name="Fujii C."/>
            <person name="Garland S.A."/>
            <person name="Mason T.M."/>
            <person name="Olsen G.J."/>
            <person name="Fraser C.M."/>
            <person name="Smith H.O."/>
            <person name="Woese C.R."/>
            <person name="Venter J.C."/>
        </authorList>
    </citation>
    <scope>NUCLEOTIDE SEQUENCE [LARGE SCALE GENOMIC DNA]</scope>
    <source>
        <strain>ATCC 49558 / DSM 4304 / JCM 9628 / NBRC 100126 / VC-16</strain>
    </source>
</reference>